<proteinExistence type="inferred from homology"/>
<accession>A4SHU7</accession>
<evidence type="ECO:0000255" key="1">
    <source>
        <dbReference type="HAMAP-Rule" id="MF_00362"/>
    </source>
</evidence>
<evidence type="ECO:0000305" key="2"/>
<feature type="chain" id="PRO_1000005461" description="Large ribosomal subunit protein uL10">
    <location>
        <begin position="1"/>
        <end position="166"/>
    </location>
</feature>
<dbReference type="EMBL" id="CP000644">
    <property type="protein sequence ID" value="ABO88469.1"/>
    <property type="molecule type" value="Genomic_DNA"/>
</dbReference>
<dbReference type="RefSeq" id="WP_005318563.1">
    <property type="nucleotide sequence ID" value="NC_009348.1"/>
</dbReference>
<dbReference type="STRING" id="29491.GCA_000820065_03158"/>
<dbReference type="GeneID" id="92725358"/>
<dbReference type="KEGG" id="asa:ASA_0281"/>
<dbReference type="eggNOG" id="COG0244">
    <property type="taxonomic scope" value="Bacteria"/>
</dbReference>
<dbReference type="HOGENOM" id="CLU_092227_0_2_6"/>
<dbReference type="Proteomes" id="UP000000225">
    <property type="component" value="Chromosome"/>
</dbReference>
<dbReference type="GO" id="GO:0015934">
    <property type="term" value="C:large ribosomal subunit"/>
    <property type="evidence" value="ECO:0007669"/>
    <property type="project" value="InterPro"/>
</dbReference>
<dbReference type="GO" id="GO:0070180">
    <property type="term" value="F:large ribosomal subunit rRNA binding"/>
    <property type="evidence" value="ECO:0007669"/>
    <property type="project" value="UniProtKB-UniRule"/>
</dbReference>
<dbReference type="GO" id="GO:0003735">
    <property type="term" value="F:structural constituent of ribosome"/>
    <property type="evidence" value="ECO:0007669"/>
    <property type="project" value="InterPro"/>
</dbReference>
<dbReference type="GO" id="GO:0006412">
    <property type="term" value="P:translation"/>
    <property type="evidence" value="ECO:0007669"/>
    <property type="project" value="UniProtKB-UniRule"/>
</dbReference>
<dbReference type="CDD" id="cd05797">
    <property type="entry name" value="Ribosomal_L10"/>
    <property type="match status" value="1"/>
</dbReference>
<dbReference type="FunFam" id="3.30.70.1730:FF:000001">
    <property type="entry name" value="50S ribosomal protein L10"/>
    <property type="match status" value="1"/>
</dbReference>
<dbReference type="Gene3D" id="3.30.70.1730">
    <property type="match status" value="1"/>
</dbReference>
<dbReference type="Gene3D" id="6.10.250.2350">
    <property type="match status" value="1"/>
</dbReference>
<dbReference type="HAMAP" id="MF_00362">
    <property type="entry name" value="Ribosomal_uL10"/>
    <property type="match status" value="1"/>
</dbReference>
<dbReference type="InterPro" id="IPR001790">
    <property type="entry name" value="Ribosomal_uL10"/>
</dbReference>
<dbReference type="InterPro" id="IPR043141">
    <property type="entry name" value="Ribosomal_uL10-like_sf"/>
</dbReference>
<dbReference type="InterPro" id="IPR022973">
    <property type="entry name" value="Ribosomal_uL10_bac"/>
</dbReference>
<dbReference type="InterPro" id="IPR047865">
    <property type="entry name" value="Ribosomal_uL10_bac_type"/>
</dbReference>
<dbReference type="InterPro" id="IPR002363">
    <property type="entry name" value="Ribosomal_uL10_CS_bac"/>
</dbReference>
<dbReference type="NCBIfam" id="NF000955">
    <property type="entry name" value="PRK00099.1-1"/>
    <property type="match status" value="1"/>
</dbReference>
<dbReference type="PANTHER" id="PTHR11560">
    <property type="entry name" value="39S RIBOSOMAL PROTEIN L10, MITOCHONDRIAL"/>
    <property type="match status" value="1"/>
</dbReference>
<dbReference type="Pfam" id="PF00466">
    <property type="entry name" value="Ribosomal_L10"/>
    <property type="match status" value="1"/>
</dbReference>
<dbReference type="SUPFAM" id="SSF160369">
    <property type="entry name" value="Ribosomal protein L10-like"/>
    <property type="match status" value="1"/>
</dbReference>
<dbReference type="PROSITE" id="PS01109">
    <property type="entry name" value="RIBOSOMAL_L10"/>
    <property type="match status" value="1"/>
</dbReference>
<organism>
    <name type="scientific">Aeromonas salmonicida (strain A449)</name>
    <dbReference type="NCBI Taxonomy" id="382245"/>
    <lineage>
        <taxon>Bacteria</taxon>
        <taxon>Pseudomonadati</taxon>
        <taxon>Pseudomonadota</taxon>
        <taxon>Gammaproteobacteria</taxon>
        <taxon>Aeromonadales</taxon>
        <taxon>Aeromonadaceae</taxon>
        <taxon>Aeromonas</taxon>
    </lineage>
</organism>
<name>RL10_AERS4</name>
<gene>
    <name evidence="1" type="primary">rplJ</name>
    <name type="ordered locus">ASA_0281</name>
</gene>
<keyword id="KW-0687">Ribonucleoprotein</keyword>
<keyword id="KW-0689">Ribosomal protein</keyword>
<keyword id="KW-0694">RNA-binding</keyword>
<keyword id="KW-0699">rRNA-binding</keyword>
<reference key="1">
    <citation type="journal article" date="2008" name="BMC Genomics">
        <title>The genome of Aeromonas salmonicida subsp. salmonicida A449: insights into the evolution of a fish pathogen.</title>
        <authorList>
            <person name="Reith M.E."/>
            <person name="Singh R.K."/>
            <person name="Curtis B."/>
            <person name="Boyd J.M."/>
            <person name="Bouevitch A."/>
            <person name="Kimball J."/>
            <person name="Munholland J."/>
            <person name="Murphy C."/>
            <person name="Sarty D."/>
            <person name="Williams J."/>
            <person name="Nash J.H."/>
            <person name="Johnson S.C."/>
            <person name="Brown L.L."/>
        </authorList>
    </citation>
    <scope>NUCLEOTIDE SEQUENCE [LARGE SCALE GENOMIC DNA]</scope>
    <source>
        <strain>A449</strain>
    </source>
</reference>
<comment type="function">
    <text evidence="1">Forms part of the ribosomal stalk, playing a central role in the interaction of the ribosome with GTP-bound translation factors.</text>
</comment>
<comment type="subunit">
    <text evidence="1">Part of the ribosomal stalk of the 50S ribosomal subunit. The N-terminus interacts with L11 and the large rRNA to form the base of the stalk. The C-terminus forms an elongated spine to which L12 dimers bind in a sequential fashion forming a multimeric L10(L12)X complex.</text>
</comment>
<comment type="similarity">
    <text evidence="1">Belongs to the universal ribosomal protein uL10 family.</text>
</comment>
<sequence>MALGLEDKKAIVAEVNEAAKGALSAVVADSRGVTVDKMTVLRKTAREAGVYMRVVRNTLLRRAVEGTEFACLNDVLTGPTLIAFSNEHPGAAARLFKEFAKANQKFEIKAGAFNGEFIAAAQIDRLATLPTYDEAIAKLMATMKEASAGKLVRTIAAVRDQKQAAA</sequence>
<protein>
    <recommendedName>
        <fullName evidence="1">Large ribosomal subunit protein uL10</fullName>
    </recommendedName>
    <alternativeName>
        <fullName evidence="2">50S ribosomal protein L10</fullName>
    </alternativeName>
</protein>